<feature type="chain" id="PRO_0000325301" description="Lipoyl synthase">
    <location>
        <begin position="1"/>
        <end position="320"/>
    </location>
</feature>
<feature type="domain" description="Radical SAM core" evidence="2">
    <location>
        <begin position="72"/>
        <end position="289"/>
    </location>
</feature>
<feature type="region of interest" description="Disordered" evidence="3">
    <location>
        <begin position="1"/>
        <end position="30"/>
    </location>
</feature>
<feature type="compositionally biased region" description="Basic and acidic residues" evidence="3">
    <location>
        <begin position="1"/>
        <end position="24"/>
    </location>
</feature>
<feature type="binding site" evidence="1">
    <location>
        <position position="60"/>
    </location>
    <ligand>
        <name>[4Fe-4S] cluster</name>
        <dbReference type="ChEBI" id="CHEBI:49883"/>
        <label>1</label>
    </ligand>
</feature>
<feature type="binding site" evidence="1">
    <location>
        <position position="65"/>
    </location>
    <ligand>
        <name>[4Fe-4S] cluster</name>
        <dbReference type="ChEBI" id="CHEBI:49883"/>
        <label>1</label>
    </ligand>
</feature>
<feature type="binding site" evidence="1">
    <location>
        <position position="71"/>
    </location>
    <ligand>
        <name>[4Fe-4S] cluster</name>
        <dbReference type="ChEBI" id="CHEBI:49883"/>
        <label>1</label>
    </ligand>
</feature>
<feature type="binding site" evidence="1">
    <location>
        <position position="86"/>
    </location>
    <ligand>
        <name>[4Fe-4S] cluster</name>
        <dbReference type="ChEBI" id="CHEBI:49883"/>
        <label>2</label>
        <note>4Fe-4S-S-AdoMet</note>
    </ligand>
</feature>
<feature type="binding site" evidence="1">
    <location>
        <position position="90"/>
    </location>
    <ligand>
        <name>[4Fe-4S] cluster</name>
        <dbReference type="ChEBI" id="CHEBI:49883"/>
        <label>2</label>
        <note>4Fe-4S-S-AdoMet</note>
    </ligand>
</feature>
<feature type="binding site" evidence="1">
    <location>
        <position position="93"/>
    </location>
    <ligand>
        <name>[4Fe-4S] cluster</name>
        <dbReference type="ChEBI" id="CHEBI:49883"/>
        <label>2</label>
        <note>4Fe-4S-S-AdoMet</note>
    </ligand>
</feature>
<feature type="binding site" evidence="1">
    <location>
        <position position="300"/>
    </location>
    <ligand>
        <name>[4Fe-4S] cluster</name>
        <dbReference type="ChEBI" id="CHEBI:49883"/>
        <label>1</label>
    </ligand>
</feature>
<dbReference type="EC" id="2.8.1.8" evidence="1"/>
<dbReference type="EMBL" id="CP000143">
    <property type="protein sequence ID" value="ABA78940.1"/>
    <property type="molecule type" value="Genomic_DNA"/>
</dbReference>
<dbReference type="RefSeq" id="WP_002719936.1">
    <property type="nucleotide sequence ID" value="NZ_CP030271.1"/>
</dbReference>
<dbReference type="RefSeq" id="YP_352841.1">
    <property type="nucleotide sequence ID" value="NC_007493.2"/>
</dbReference>
<dbReference type="SMR" id="Q3J2P4"/>
<dbReference type="STRING" id="272943.RSP_2783"/>
<dbReference type="EnsemblBacteria" id="ABA78940">
    <property type="protein sequence ID" value="ABA78940"/>
    <property type="gene ID" value="RSP_2783"/>
</dbReference>
<dbReference type="GeneID" id="67446519"/>
<dbReference type="KEGG" id="rsp:RSP_2783"/>
<dbReference type="PATRIC" id="fig|272943.9.peg.1707"/>
<dbReference type="eggNOG" id="COG0320">
    <property type="taxonomic scope" value="Bacteria"/>
</dbReference>
<dbReference type="OrthoDB" id="9787898at2"/>
<dbReference type="PhylomeDB" id="Q3J2P4"/>
<dbReference type="UniPathway" id="UPA00538">
    <property type="reaction ID" value="UER00593"/>
</dbReference>
<dbReference type="Proteomes" id="UP000002703">
    <property type="component" value="Chromosome 1"/>
</dbReference>
<dbReference type="GO" id="GO:0005737">
    <property type="term" value="C:cytoplasm"/>
    <property type="evidence" value="ECO:0007669"/>
    <property type="project" value="UniProtKB-SubCell"/>
</dbReference>
<dbReference type="GO" id="GO:0051539">
    <property type="term" value="F:4 iron, 4 sulfur cluster binding"/>
    <property type="evidence" value="ECO:0007669"/>
    <property type="project" value="UniProtKB-UniRule"/>
</dbReference>
<dbReference type="GO" id="GO:0016992">
    <property type="term" value="F:lipoate synthase activity"/>
    <property type="evidence" value="ECO:0007669"/>
    <property type="project" value="UniProtKB-UniRule"/>
</dbReference>
<dbReference type="GO" id="GO:0046872">
    <property type="term" value="F:metal ion binding"/>
    <property type="evidence" value="ECO:0007669"/>
    <property type="project" value="UniProtKB-KW"/>
</dbReference>
<dbReference type="FunFam" id="3.20.20.70:FF:000040">
    <property type="entry name" value="Lipoyl synthase"/>
    <property type="match status" value="1"/>
</dbReference>
<dbReference type="Gene3D" id="3.20.20.70">
    <property type="entry name" value="Aldolase class I"/>
    <property type="match status" value="1"/>
</dbReference>
<dbReference type="HAMAP" id="MF_00206">
    <property type="entry name" value="Lipoyl_synth"/>
    <property type="match status" value="1"/>
</dbReference>
<dbReference type="InterPro" id="IPR013785">
    <property type="entry name" value="Aldolase_TIM"/>
</dbReference>
<dbReference type="InterPro" id="IPR006638">
    <property type="entry name" value="Elp3/MiaA/NifB-like_rSAM"/>
</dbReference>
<dbReference type="InterPro" id="IPR031691">
    <property type="entry name" value="LIAS_N"/>
</dbReference>
<dbReference type="InterPro" id="IPR003698">
    <property type="entry name" value="Lipoyl_synth"/>
</dbReference>
<dbReference type="InterPro" id="IPR007197">
    <property type="entry name" value="rSAM"/>
</dbReference>
<dbReference type="NCBIfam" id="TIGR00510">
    <property type="entry name" value="lipA"/>
    <property type="match status" value="1"/>
</dbReference>
<dbReference type="NCBIfam" id="NF004019">
    <property type="entry name" value="PRK05481.1"/>
    <property type="match status" value="1"/>
</dbReference>
<dbReference type="NCBIfam" id="NF009544">
    <property type="entry name" value="PRK12928.1"/>
    <property type="match status" value="1"/>
</dbReference>
<dbReference type="PANTHER" id="PTHR10949">
    <property type="entry name" value="LIPOYL SYNTHASE"/>
    <property type="match status" value="1"/>
</dbReference>
<dbReference type="PANTHER" id="PTHR10949:SF0">
    <property type="entry name" value="LIPOYL SYNTHASE, MITOCHONDRIAL"/>
    <property type="match status" value="1"/>
</dbReference>
<dbReference type="Pfam" id="PF16881">
    <property type="entry name" value="LIAS_N"/>
    <property type="match status" value="1"/>
</dbReference>
<dbReference type="Pfam" id="PF04055">
    <property type="entry name" value="Radical_SAM"/>
    <property type="match status" value="1"/>
</dbReference>
<dbReference type="PIRSF" id="PIRSF005963">
    <property type="entry name" value="Lipoyl_synth"/>
    <property type="match status" value="1"/>
</dbReference>
<dbReference type="SFLD" id="SFLDF00271">
    <property type="entry name" value="lipoyl_synthase"/>
    <property type="match status" value="1"/>
</dbReference>
<dbReference type="SFLD" id="SFLDG01058">
    <property type="entry name" value="lipoyl_synthase_like"/>
    <property type="match status" value="1"/>
</dbReference>
<dbReference type="SMART" id="SM00729">
    <property type="entry name" value="Elp3"/>
    <property type="match status" value="1"/>
</dbReference>
<dbReference type="SUPFAM" id="SSF102114">
    <property type="entry name" value="Radical SAM enzymes"/>
    <property type="match status" value="1"/>
</dbReference>
<dbReference type="PROSITE" id="PS51918">
    <property type="entry name" value="RADICAL_SAM"/>
    <property type="match status" value="1"/>
</dbReference>
<evidence type="ECO:0000255" key="1">
    <source>
        <dbReference type="HAMAP-Rule" id="MF_00206"/>
    </source>
</evidence>
<evidence type="ECO:0000255" key="2">
    <source>
        <dbReference type="PROSITE-ProRule" id="PRU01266"/>
    </source>
</evidence>
<evidence type="ECO:0000256" key="3">
    <source>
        <dbReference type="SAM" id="MobiDB-lite"/>
    </source>
</evidence>
<keyword id="KW-0004">4Fe-4S</keyword>
<keyword id="KW-0963">Cytoplasm</keyword>
<keyword id="KW-0408">Iron</keyword>
<keyword id="KW-0411">Iron-sulfur</keyword>
<keyword id="KW-0479">Metal-binding</keyword>
<keyword id="KW-1185">Reference proteome</keyword>
<keyword id="KW-0949">S-adenosyl-L-methionine</keyword>
<keyword id="KW-0808">Transferase</keyword>
<protein>
    <recommendedName>
        <fullName evidence="1">Lipoyl synthase</fullName>
        <ecNumber evidence="1">2.8.1.8</ecNumber>
    </recommendedName>
    <alternativeName>
        <fullName evidence="1">Lip-syn</fullName>
        <shortName evidence="1">LS</shortName>
    </alternativeName>
    <alternativeName>
        <fullName evidence="1">Lipoate synthase</fullName>
    </alternativeName>
    <alternativeName>
        <fullName evidence="1">Lipoic acid synthase</fullName>
    </alternativeName>
    <alternativeName>
        <fullName evidence="1">Sulfur insertion protein LipA</fullName>
    </alternativeName>
</protein>
<gene>
    <name evidence="1" type="primary">lipA</name>
    <name type="ordered locus">RHOS4_13720</name>
    <name type="ordered locus">RSP_2783</name>
</gene>
<organism>
    <name type="scientific">Cereibacter sphaeroides (strain ATCC 17023 / DSM 158 / JCM 6121 / CCUG 31486 / LMG 2827 / NBRC 12203 / NCIMB 8253 / ATH 2.4.1.)</name>
    <name type="common">Rhodobacter sphaeroides</name>
    <dbReference type="NCBI Taxonomy" id="272943"/>
    <lineage>
        <taxon>Bacteria</taxon>
        <taxon>Pseudomonadati</taxon>
        <taxon>Pseudomonadota</taxon>
        <taxon>Alphaproteobacteria</taxon>
        <taxon>Rhodobacterales</taxon>
        <taxon>Paracoccaceae</taxon>
        <taxon>Cereibacter</taxon>
    </lineage>
</organism>
<name>LIPA_CERS4</name>
<proteinExistence type="inferred from homology"/>
<comment type="function">
    <text evidence="1">Catalyzes the radical-mediated insertion of two sulfur atoms into the C-6 and C-8 positions of the octanoyl moiety bound to the lipoyl domains of lipoate-dependent enzymes, thereby converting the octanoylated domains into lipoylated derivatives.</text>
</comment>
<comment type="catalytic activity">
    <reaction evidence="1">
        <text>[[Fe-S] cluster scaffold protein carrying a second [4Fe-4S](2+) cluster] + N(6)-octanoyl-L-lysyl-[protein] + 2 oxidized [2Fe-2S]-[ferredoxin] + 2 S-adenosyl-L-methionine + 4 H(+) = [[Fe-S] cluster scaffold protein] + N(6)-[(R)-dihydrolipoyl]-L-lysyl-[protein] + 4 Fe(3+) + 2 hydrogen sulfide + 2 5'-deoxyadenosine + 2 L-methionine + 2 reduced [2Fe-2S]-[ferredoxin]</text>
        <dbReference type="Rhea" id="RHEA:16585"/>
        <dbReference type="Rhea" id="RHEA-COMP:9928"/>
        <dbReference type="Rhea" id="RHEA-COMP:10000"/>
        <dbReference type="Rhea" id="RHEA-COMP:10001"/>
        <dbReference type="Rhea" id="RHEA-COMP:10475"/>
        <dbReference type="Rhea" id="RHEA-COMP:14568"/>
        <dbReference type="Rhea" id="RHEA-COMP:14569"/>
        <dbReference type="ChEBI" id="CHEBI:15378"/>
        <dbReference type="ChEBI" id="CHEBI:17319"/>
        <dbReference type="ChEBI" id="CHEBI:29034"/>
        <dbReference type="ChEBI" id="CHEBI:29919"/>
        <dbReference type="ChEBI" id="CHEBI:33722"/>
        <dbReference type="ChEBI" id="CHEBI:33737"/>
        <dbReference type="ChEBI" id="CHEBI:33738"/>
        <dbReference type="ChEBI" id="CHEBI:57844"/>
        <dbReference type="ChEBI" id="CHEBI:59789"/>
        <dbReference type="ChEBI" id="CHEBI:78809"/>
        <dbReference type="ChEBI" id="CHEBI:83100"/>
        <dbReference type="EC" id="2.8.1.8"/>
    </reaction>
</comment>
<comment type="cofactor">
    <cofactor evidence="1">
        <name>[4Fe-4S] cluster</name>
        <dbReference type="ChEBI" id="CHEBI:49883"/>
    </cofactor>
    <text evidence="1">Binds 2 [4Fe-4S] clusters per subunit. One cluster is coordinated with 3 cysteines and an exchangeable S-adenosyl-L-methionine.</text>
</comment>
<comment type="pathway">
    <text evidence="1">Protein modification; protein lipoylation via endogenous pathway; protein N(6)-(lipoyl)lysine from octanoyl-[acyl-carrier-protein]: step 2/2.</text>
</comment>
<comment type="subcellular location">
    <subcellularLocation>
        <location evidence="1">Cytoplasm</location>
    </subcellularLocation>
</comment>
<comment type="similarity">
    <text evidence="1">Belongs to the radical SAM superfamily. Lipoyl synthase family.</text>
</comment>
<reference key="1">
    <citation type="submission" date="2005-09" db="EMBL/GenBank/DDBJ databases">
        <title>Complete sequence of chromosome 1 of Rhodobacter sphaeroides 2.4.1.</title>
        <authorList>
            <person name="Copeland A."/>
            <person name="Lucas S."/>
            <person name="Lapidus A."/>
            <person name="Barry K."/>
            <person name="Detter J.C."/>
            <person name="Glavina T."/>
            <person name="Hammon N."/>
            <person name="Israni S."/>
            <person name="Pitluck S."/>
            <person name="Richardson P."/>
            <person name="Mackenzie C."/>
            <person name="Choudhary M."/>
            <person name="Larimer F."/>
            <person name="Hauser L.J."/>
            <person name="Land M."/>
            <person name="Donohue T.J."/>
            <person name="Kaplan S."/>
        </authorList>
    </citation>
    <scope>NUCLEOTIDE SEQUENCE [LARGE SCALE GENOMIC DNA]</scope>
    <source>
        <strain>ATCC 17023 / DSM 158 / JCM 6121 / CCUG 31486 / LMG 2827 / NBRC 12203 / NCIMB 8253 / ATH 2.4.1.</strain>
    </source>
</reference>
<sequence>MIGKLVRDLKIPDQRHPEKAHRPDNVQPKKPSWIRVKAPTSEGYKETRDIIRGQKLATVCEEAGCPNVGECWSQGHATMMIMGEICTRGCSFCNVATGRPQALDAFEPGRVAHAVSQLGLKHVVVTSVDRDDLEDGGAEHFAQTIRAIRHRAPATTIEVLVPDFLKCGPSALETVVAARPDVFNHNLETVPGLYPEVRPGARYFHSLRLLQRAKELDPSIFTKSGIMVGLGEDRQGVLQVMDDMRSAEVDFLTIGQYLQPTPKHHRVDRFVTPEEFAGYEKAAYGKGFLMVSATPLTRSSYHAGDDFARLRDARQKRLGA</sequence>
<accession>Q3J2P4</accession>